<proteinExistence type="inferred from homology"/>
<feature type="chain" id="PRO_1000202265" description="Serine hydroxymethyltransferase">
    <location>
        <begin position="1"/>
        <end position="422"/>
    </location>
</feature>
<feature type="binding site" evidence="1">
    <location>
        <position position="118"/>
    </location>
    <ligand>
        <name>(6S)-5,6,7,8-tetrahydrofolate</name>
        <dbReference type="ChEBI" id="CHEBI:57453"/>
    </ligand>
</feature>
<feature type="binding site" evidence="1">
    <location>
        <begin position="122"/>
        <end position="124"/>
    </location>
    <ligand>
        <name>(6S)-5,6,7,8-tetrahydrofolate</name>
        <dbReference type="ChEBI" id="CHEBI:57453"/>
    </ligand>
</feature>
<feature type="binding site" evidence="1">
    <location>
        <position position="243"/>
    </location>
    <ligand>
        <name>(6S)-5,6,7,8-tetrahydrofolate</name>
        <dbReference type="ChEBI" id="CHEBI:57453"/>
    </ligand>
</feature>
<feature type="binding site" evidence="1">
    <location>
        <begin position="351"/>
        <end position="353"/>
    </location>
    <ligand>
        <name>(6S)-5,6,7,8-tetrahydrofolate</name>
        <dbReference type="ChEBI" id="CHEBI:57453"/>
    </ligand>
</feature>
<feature type="site" description="Plays an important role in substrate specificity" evidence="1">
    <location>
        <position position="226"/>
    </location>
</feature>
<feature type="modified residue" description="N6-(pyridoxal phosphate)lysine" evidence="1">
    <location>
        <position position="227"/>
    </location>
</feature>
<reference key="1">
    <citation type="submission" date="2009-06" db="EMBL/GenBank/DDBJ databases">
        <title>Complete sequence of Thermotogales bacterium TBF 19.5.1.</title>
        <authorList>
            <consortium name="US DOE Joint Genome Institute"/>
            <person name="Lucas S."/>
            <person name="Copeland A."/>
            <person name="Lapidus A."/>
            <person name="Glavina del Rio T."/>
            <person name="Tice H."/>
            <person name="Bruce D."/>
            <person name="Goodwin L."/>
            <person name="Pitluck S."/>
            <person name="Chertkov O."/>
            <person name="Brettin T."/>
            <person name="Detter J.C."/>
            <person name="Han C."/>
            <person name="Schmutz J."/>
            <person name="Larimer F."/>
            <person name="Land M."/>
            <person name="Hauser L."/>
            <person name="Kyrpides N."/>
            <person name="Ovchinnikova G."/>
            <person name="Noll K."/>
        </authorList>
    </citation>
    <scope>NUCLEOTIDE SEQUENCE [LARGE SCALE GENOMIC DNA]</scope>
    <source>
        <strain>ATCC BAA-1733 / DSM 21960 / TBF 19.5.1</strain>
    </source>
</reference>
<keyword id="KW-0028">Amino-acid biosynthesis</keyword>
<keyword id="KW-0963">Cytoplasm</keyword>
<keyword id="KW-0554">One-carbon metabolism</keyword>
<keyword id="KW-0663">Pyridoxal phosphate</keyword>
<keyword id="KW-1185">Reference proteome</keyword>
<keyword id="KW-0808">Transferase</keyword>
<evidence type="ECO:0000255" key="1">
    <source>
        <dbReference type="HAMAP-Rule" id="MF_00051"/>
    </source>
</evidence>
<comment type="function">
    <text evidence="1">Catalyzes the reversible interconversion of serine and glycine with tetrahydrofolate (THF) serving as the one-carbon carrier. This reaction serves as the major source of one-carbon groups required for the biosynthesis of purines, thymidylate, methionine, and other important biomolecules. Also exhibits THF-independent aldolase activity toward beta-hydroxyamino acids, producing glycine and aldehydes, via a retro-aldol mechanism.</text>
</comment>
<comment type="catalytic activity">
    <reaction evidence="1">
        <text>(6R)-5,10-methylene-5,6,7,8-tetrahydrofolate + glycine + H2O = (6S)-5,6,7,8-tetrahydrofolate + L-serine</text>
        <dbReference type="Rhea" id="RHEA:15481"/>
        <dbReference type="ChEBI" id="CHEBI:15377"/>
        <dbReference type="ChEBI" id="CHEBI:15636"/>
        <dbReference type="ChEBI" id="CHEBI:33384"/>
        <dbReference type="ChEBI" id="CHEBI:57305"/>
        <dbReference type="ChEBI" id="CHEBI:57453"/>
        <dbReference type="EC" id="2.1.2.1"/>
    </reaction>
</comment>
<comment type="cofactor">
    <cofactor evidence="1">
        <name>pyridoxal 5'-phosphate</name>
        <dbReference type="ChEBI" id="CHEBI:597326"/>
    </cofactor>
</comment>
<comment type="pathway">
    <text evidence="1">One-carbon metabolism; tetrahydrofolate interconversion.</text>
</comment>
<comment type="pathway">
    <text evidence="1">Amino-acid biosynthesis; glycine biosynthesis; glycine from L-serine: step 1/1.</text>
</comment>
<comment type="subunit">
    <text evidence="1">Homodimer.</text>
</comment>
<comment type="subcellular location">
    <subcellularLocation>
        <location evidence="1">Cytoplasm</location>
    </subcellularLocation>
</comment>
<comment type="similarity">
    <text evidence="1">Belongs to the SHMT family.</text>
</comment>
<dbReference type="EC" id="2.1.2.1" evidence="1"/>
<dbReference type="EMBL" id="CP001634">
    <property type="protein sequence ID" value="ACR80148.1"/>
    <property type="molecule type" value="Genomic_DNA"/>
</dbReference>
<dbReference type="RefSeq" id="WP_015868795.1">
    <property type="nucleotide sequence ID" value="NC_012785.1"/>
</dbReference>
<dbReference type="SMR" id="C5CEA8"/>
<dbReference type="STRING" id="521045.Kole_1456"/>
<dbReference type="KEGG" id="kol:Kole_1456"/>
<dbReference type="eggNOG" id="COG0112">
    <property type="taxonomic scope" value="Bacteria"/>
</dbReference>
<dbReference type="HOGENOM" id="CLU_022477_2_1_0"/>
<dbReference type="OrthoDB" id="9803846at2"/>
<dbReference type="UniPathway" id="UPA00193"/>
<dbReference type="UniPathway" id="UPA00288">
    <property type="reaction ID" value="UER01023"/>
</dbReference>
<dbReference type="Proteomes" id="UP000002382">
    <property type="component" value="Chromosome"/>
</dbReference>
<dbReference type="GO" id="GO:0005829">
    <property type="term" value="C:cytosol"/>
    <property type="evidence" value="ECO:0007669"/>
    <property type="project" value="TreeGrafter"/>
</dbReference>
<dbReference type="GO" id="GO:0004372">
    <property type="term" value="F:glycine hydroxymethyltransferase activity"/>
    <property type="evidence" value="ECO:0007669"/>
    <property type="project" value="UniProtKB-UniRule"/>
</dbReference>
<dbReference type="GO" id="GO:0030170">
    <property type="term" value="F:pyridoxal phosphate binding"/>
    <property type="evidence" value="ECO:0007669"/>
    <property type="project" value="UniProtKB-UniRule"/>
</dbReference>
<dbReference type="GO" id="GO:0019264">
    <property type="term" value="P:glycine biosynthetic process from serine"/>
    <property type="evidence" value="ECO:0007669"/>
    <property type="project" value="UniProtKB-UniRule"/>
</dbReference>
<dbReference type="GO" id="GO:0035999">
    <property type="term" value="P:tetrahydrofolate interconversion"/>
    <property type="evidence" value="ECO:0007669"/>
    <property type="project" value="UniProtKB-UniRule"/>
</dbReference>
<dbReference type="CDD" id="cd00378">
    <property type="entry name" value="SHMT"/>
    <property type="match status" value="1"/>
</dbReference>
<dbReference type="FunFam" id="3.40.640.10:FF:000001">
    <property type="entry name" value="Serine hydroxymethyltransferase"/>
    <property type="match status" value="1"/>
</dbReference>
<dbReference type="FunFam" id="3.90.1150.10:FF:000003">
    <property type="entry name" value="Serine hydroxymethyltransferase"/>
    <property type="match status" value="1"/>
</dbReference>
<dbReference type="Gene3D" id="3.90.1150.10">
    <property type="entry name" value="Aspartate Aminotransferase, domain 1"/>
    <property type="match status" value="1"/>
</dbReference>
<dbReference type="Gene3D" id="3.40.640.10">
    <property type="entry name" value="Type I PLP-dependent aspartate aminotransferase-like (Major domain)"/>
    <property type="match status" value="1"/>
</dbReference>
<dbReference type="HAMAP" id="MF_00051">
    <property type="entry name" value="SHMT"/>
    <property type="match status" value="1"/>
</dbReference>
<dbReference type="InterPro" id="IPR015424">
    <property type="entry name" value="PyrdxlP-dep_Trfase"/>
</dbReference>
<dbReference type="InterPro" id="IPR015421">
    <property type="entry name" value="PyrdxlP-dep_Trfase_major"/>
</dbReference>
<dbReference type="InterPro" id="IPR015422">
    <property type="entry name" value="PyrdxlP-dep_Trfase_small"/>
</dbReference>
<dbReference type="InterPro" id="IPR001085">
    <property type="entry name" value="Ser_HO-MeTrfase"/>
</dbReference>
<dbReference type="InterPro" id="IPR049943">
    <property type="entry name" value="Ser_HO-MeTrfase-like"/>
</dbReference>
<dbReference type="InterPro" id="IPR019798">
    <property type="entry name" value="Ser_HO-MeTrfase_PLP_BS"/>
</dbReference>
<dbReference type="InterPro" id="IPR039429">
    <property type="entry name" value="SHMT-like_dom"/>
</dbReference>
<dbReference type="NCBIfam" id="NF000586">
    <property type="entry name" value="PRK00011.1"/>
    <property type="match status" value="1"/>
</dbReference>
<dbReference type="PANTHER" id="PTHR11680">
    <property type="entry name" value="SERINE HYDROXYMETHYLTRANSFERASE"/>
    <property type="match status" value="1"/>
</dbReference>
<dbReference type="PANTHER" id="PTHR11680:SF35">
    <property type="entry name" value="SERINE HYDROXYMETHYLTRANSFERASE 1"/>
    <property type="match status" value="1"/>
</dbReference>
<dbReference type="Pfam" id="PF00464">
    <property type="entry name" value="SHMT"/>
    <property type="match status" value="1"/>
</dbReference>
<dbReference type="PIRSF" id="PIRSF000412">
    <property type="entry name" value="SHMT"/>
    <property type="match status" value="1"/>
</dbReference>
<dbReference type="SUPFAM" id="SSF53383">
    <property type="entry name" value="PLP-dependent transferases"/>
    <property type="match status" value="1"/>
</dbReference>
<dbReference type="PROSITE" id="PS00096">
    <property type="entry name" value="SHMT"/>
    <property type="match status" value="1"/>
</dbReference>
<sequence>MWELLAKGDPEVYEIVMKELGRQEEGLELIASENFVSPAVMEAMGSTLTNKYAEGYPRRRYYGGCKFVDEAEQLARERVKKLFNCKYANVQPHSGSQANMAAYLAVANPGDTIMGMSLSHGGHLTHGSPVNFSGKLFNIVSYGVDLETEVLDYDEIERLALEHKPKIIIAGGSAYSRIIDFKRFREIADKVGAYLIVDMAHFAGLVAAGLYPNPVDHAHIVTSTTHKTLRGPRGGLILTNDEELYKAINKAVFPGIQGGPLMHVIAAKAVAFGEALKDEFKEYQMRIITNAKALAKELENLGLRIVSGGTDTHLFLVDLNPKNVTGKAAEKALESADITVNKNTIPKETRSPFVTSGIRIGTPAVTTRGMGESEMKVIAELIVKVIDNIQDEKGTIPEEIREEVKKAVHELTEKFPLYKDLT</sequence>
<name>GLYA_KOSOT</name>
<organism>
    <name type="scientific">Kosmotoga olearia (strain ATCC BAA-1733 / DSM 21960 / TBF 19.5.1)</name>
    <dbReference type="NCBI Taxonomy" id="521045"/>
    <lineage>
        <taxon>Bacteria</taxon>
        <taxon>Thermotogati</taxon>
        <taxon>Thermotogota</taxon>
        <taxon>Thermotogae</taxon>
        <taxon>Kosmotogales</taxon>
        <taxon>Kosmotogaceae</taxon>
        <taxon>Kosmotoga</taxon>
    </lineage>
</organism>
<protein>
    <recommendedName>
        <fullName evidence="1">Serine hydroxymethyltransferase</fullName>
        <shortName evidence="1">SHMT</shortName>
        <shortName evidence="1">Serine methylase</shortName>
        <ecNumber evidence="1">2.1.2.1</ecNumber>
    </recommendedName>
</protein>
<gene>
    <name evidence="1" type="primary">glyA</name>
    <name type="ordered locus">Kole_1456</name>
</gene>
<accession>C5CEA8</accession>